<proteinExistence type="evidence at protein level"/>
<sequence>MDPWDTYNIPLDHQHRLRNRRDHRHPSFSSTLLDQIYRSIDDSSTNSSSMRKTKHQNREDTRVSANRRDDFNRSKNLKTIEPVFFKHSSSSSSDSSGFSSSESDYFYRRSKSSPAISHPKPIRTTVERFERSPQNHRPNSSNKQEHGSFLKTKSKALKIYSDLKKVKQPISPGGRLATFLNSIFTGAGNTKKLNKINTTVTSTTAAAAAASSTTTCSSASSFSRSCLSKTPSSSEKSKRSVRFCPVNVIFDEDSSKYNNKNNKVYGNNEREYESIRHTLENRVMEENRRVIEAAKELLRSYQKKNKEVIEVSVEDDEEDDDDDALSCTSSDLFELDNLSAIGIDRYREELPVYETTRLNTNRIISR</sequence>
<organism evidence="6">
    <name type="scientific">Arabidopsis thaliana</name>
    <name type="common">Mouse-ear cress</name>
    <dbReference type="NCBI Taxonomy" id="3702"/>
    <lineage>
        <taxon>Eukaryota</taxon>
        <taxon>Viridiplantae</taxon>
        <taxon>Streptophyta</taxon>
        <taxon>Embryophyta</taxon>
        <taxon>Tracheophyta</taxon>
        <taxon>Spermatophyta</taxon>
        <taxon>Magnoliopsida</taxon>
        <taxon>eudicotyledons</taxon>
        <taxon>Gunneridae</taxon>
        <taxon>Pentapetalae</taxon>
        <taxon>rosids</taxon>
        <taxon>malvids</taxon>
        <taxon>Brassicales</taxon>
        <taxon>Brassicaceae</taxon>
        <taxon>Camelineae</taxon>
        <taxon>Arabidopsis</taxon>
    </lineage>
</organism>
<name>BIG1B_ARATH</name>
<gene>
    <name evidence="5" type="ordered locus">At1g54200</name>
    <name evidence="4" type="ORF">F20D21.2</name>
</gene>
<reference key="1">
    <citation type="journal article" date="2000" name="Nature">
        <title>Sequence and analysis of chromosome 1 of the plant Arabidopsis thaliana.</title>
        <authorList>
            <person name="Theologis A."/>
            <person name="Ecker J.R."/>
            <person name="Palm C.J."/>
            <person name="Federspiel N.A."/>
            <person name="Kaul S."/>
            <person name="White O."/>
            <person name="Alonso J."/>
            <person name="Altafi H."/>
            <person name="Araujo R."/>
            <person name="Bowman C.L."/>
            <person name="Brooks S.Y."/>
            <person name="Buehler E."/>
            <person name="Chan A."/>
            <person name="Chao Q."/>
            <person name="Chen H."/>
            <person name="Cheuk R.F."/>
            <person name="Chin C.W."/>
            <person name="Chung M.K."/>
            <person name="Conn L."/>
            <person name="Conway A.B."/>
            <person name="Conway A.R."/>
            <person name="Creasy T.H."/>
            <person name="Dewar K."/>
            <person name="Dunn P."/>
            <person name="Etgu P."/>
            <person name="Feldblyum T.V."/>
            <person name="Feng J.-D."/>
            <person name="Fong B."/>
            <person name="Fujii C.Y."/>
            <person name="Gill J.E."/>
            <person name="Goldsmith A.D."/>
            <person name="Haas B."/>
            <person name="Hansen N.F."/>
            <person name="Hughes B."/>
            <person name="Huizar L."/>
            <person name="Hunter J.L."/>
            <person name="Jenkins J."/>
            <person name="Johnson-Hopson C."/>
            <person name="Khan S."/>
            <person name="Khaykin E."/>
            <person name="Kim C.J."/>
            <person name="Koo H.L."/>
            <person name="Kremenetskaia I."/>
            <person name="Kurtz D.B."/>
            <person name="Kwan A."/>
            <person name="Lam B."/>
            <person name="Langin-Hooper S."/>
            <person name="Lee A."/>
            <person name="Lee J.M."/>
            <person name="Lenz C.A."/>
            <person name="Li J.H."/>
            <person name="Li Y.-P."/>
            <person name="Lin X."/>
            <person name="Liu S.X."/>
            <person name="Liu Z.A."/>
            <person name="Luros J.S."/>
            <person name="Maiti R."/>
            <person name="Marziali A."/>
            <person name="Militscher J."/>
            <person name="Miranda M."/>
            <person name="Nguyen M."/>
            <person name="Nierman W.C."/>
            <person name="Osborne B.I."/>
            <person name="Pai G."/>
            <person name="Peterson J."/>
            <person name="Pham P.K."/>
            <person name="Rizzo M."/>
            <person name="Rooney T."/>
            <person name="Rowley D."/>
            <person name="Sakano H."/>
            <person name="Salzberg S.L."/>
            <person name="Schwartz J.R."/>
            <person name="Shinn P."/>
            <person name="Southwick A.M."/>
            <person name="Sun H."/>
            <person name="Tallon L.J."/>
            <person name="Tambunga G."/>
            <person name="Toriumi M.J."/>
            <person name="Town C.D."/>
            <person name="Utterback T."/>
            <person name="Van Aken S."/>
            <person name="Vaysberg M."/>
            <person name="Vysotskaia V.S."/>
            <person name="Walker M."/>
            <person name="Wu D."/>
            <person name="Yu G."/>
            <person name="Fraser C.M."/>
            <person name="Venter J.C."/>
            <person name="Davis R.W."/>
        </authorList>
    </citation>
    <scope>NUCLEOTIDE SEQUENCE [LARGE SCALE GENOMIC DNA]</scope>
    <source>
        <strain>cv. Columbia</strain>
    </source>
</reference>
<reference key="2">
    <citation type="journal article" date="2017" name="Plant J.">
        <title>Araport11: a complete reannotation of the Arabidopsis thaliana reference genome.</title>
        <authorList>
            <person name="Cheng C.Y."/>
            <person name="Krishnakumar V."/>
            <person name="Chan A.P."/>
            <person name="Thibaud-Nissen F."/>
            <person name="Schobel S."/>
            <person name="Town C.D."/>
        </authorList>
    </citation>
    <scope>GENOME REANNOTATION</scope>
    <source>
        <strain>cv. Columbia</strain>
    </source>
</reference>
<reference key="3">
    <citation type="submission" date="2006-12" db="EMBL/GenBank/DDBJ databases">
        <title>Arabidopsis ORF clones.</title>
        <authorList>
            <person name="Bautista V.R."/>
            <person name="Kim C.J."/>
            <person name="Chen H."/>
            <person name="Quinitio C."/>
            <person name="Ecker J.R."/>
        </authorList>
    </citation>
    <scope>NUCLEOTIDE SEQUENCE [LARGE SCALE MRNA]</scope>
    <source>
        <strain>cv. Columbia</strain>
    </source>
</reference>
<feature type="chain" id="PRO_0000434445" description="Protein BIG GRAIN 1-like B">
    <location>
        <begin position="1"/>
        <end position="366"/>
    </location>
</feature>
<feature type="region of interest" description="Disordered" evidence="2">
    <location>
        <begin position="42"/>
        <end position="73"/>
    </location>
</feature>
<feature type="region of interest" description="Disordered" evidence="2">
    <location>
        <begin position="129"/>
        <end position="148"/>
    </location>
</feature>
<feature type="compositionally biased region" description="Basic and acidic residues" evidence="2">
    <location>
        <begin position="56"/>
        <end position="73"/>
    </location>
</feature>
<dbReference type="EMBL" id="AC005287">
    <property type="protein sequence ID" value="AAD25600.1"/>
    <property type="molecule type" value="Genomic_DNA"/>
</dbReference>
<dbReference type="EMBL" id="CP002684">
    <property type="protein sequence ID" value="AEE33060.1"/>
    <property type="molecule type" value="Genomic_DNA"/>
</dbReference>
<dbReference type="EMBL" id="BT029487">
    <property type="protein sequence ID" value="ABL66744.1"/>
    <property type="molecule type" value="mRNA"/>
</dbReference>
<dbReference type="PIR" id="C96583">
    <property type="entry name" value="C96583"/>
</dbReference>
<dbReference type="RefSeq" id="NP_175822.1">
    <property type="nucleotide sequence ID" value="NM_104298.4"/>
</dbReference>
<dbReference type="SMR" id="Q9SLL2"/>
<dbReference type="FunCoup" id="Q9SLL2">
    <property type="interactions" value="295"/>
</dbReference>
<dbReference type="IntAct" id="Q9SLL2">
    <property type="interactions" value="2"/>
</dbReference>
<dbReference type="STRING" id="3702.Q9SLL2"/>
<dbReference type="PaxDb" id="3702-AT1G54200.1"/>
<dbReference type="ProteomicsDB" id="240398"/>
<dbReference type="EnsemblPlants" id="AT1G54200.1">
    <property type="protein sequence ID" value="AT1G54200.1"/>
    <property type="gene ID" value="AT1G54200"/>
</dbReference>
<dbReference type="GeneID" id="841860"/>
<dbReference type="Gramene" id="AT1G54200.1">
    <property type="protein sequence ID" value="AT1G54200.1"/>
    <property type="gene ID" value="AT1G54200"/>
</dbReference>
<dbReference type="KEGG" id="ath:AT1G54200"/>
<dbReference type="Araport" id="AT1G54200"/>
<dbReference type="TAIR" id="AT1G54200">
    <property type="gene designation" value="BG3"/>
</dbReference>
<dbReference type="eggNOG" id="ENOG502QWFY">
    <property type="taxonomic scope" value="Eukaryota"/>
</dbReference>
<dbReference type="HOGENOM" id="CLU_048356_1_0_1"/>
<dbReference type="InParanoid" id="Q9SLL2"/>
<dbReference type="OMA" id="YRAKTEN"/>
<dbReference type="OrthoDB" id="680041at2759"/>
<dbReference type="PhylomeDB" id="Q9SLL2"/>
<dbReference type="PRO" id="PR:Q9SLL2"/>
<dbReference type="Proteomes" id="UP000006548">
    <property type="component" value="Chromosome 1"/>
</dbReference>
<dbReference type="ExpressionAtlas" id="Q9SLL2">
    <property type="expression patterns" value="baseline and differential"/>
</dbReference>
<dbReference type="GO" id="GO:0005886">
    <property type="term" value="C:plasma membrane"/>
    <property type="evidence" value="ECO:0000250"/>
    <property type="project" value="UniProtKB"/>
</dbReference>
<dbReference type="GO" id="GO:0060918">
    <property type="term" value="P:auxin transport"/>
    <property type="evidence" value="ECO:0000250"/>
    <property type="project" value="UniProtKB"/>
</dbReference>
<dbReference type="GO" id="GO:0009734">
    <property type="term" value="P:auxin-activated signaling pathway"/>
    <property type="evidence" value="ECO:0007669"/>
    <property type="project" value="UniProtKB-KW"/>
</dbReference>
<dbReference type="GO" id="GO:0010929">
    <property type="term" value="P:positive regulation of auxin mediated signaling pathway"/>
    <property type="evidence" value="ECO:0000250"/>
    <property type="project" value="UniProtKB"/>
</dbReference>
<dbReference type="InterPro" id="IPR039621">
    <property type="entry name" value="BG1-like"/>
</dbReference>
<dbReference type="PANTHER" id="PTHR33541">
    <property type="entry name" value="PROTEIN BIG GRAIN 1-LIKE A-RELATED"/>
    <property type="match status" value="1"/>
</dbReference>
<dbReference type="PANTHER" id="PTHR33541:SF13">
    <property type="entry name" value="PROTEIN BIG GRAIN 1-LIKE B-RELATED"/>
    <property type="match status" value="1"/>
</dbReference>
<accession>Q9SLL2</accession>
<protein>
    <recommendedName>
        <fullName evidence="3">Protein BIG GRAIN 1-like B</fullName>
    </recommendedName>
</protein>
<keyword id="KW-0927">Auxin signaling pathway</keyword>
<keyword id="KW-1003">Cell membrane</keyword>
<keyword id="KW-0472">Membrane</keyword>
<keyword id="KW-1185">Reference proteome</keyword>
<keyword id="KW-0813">Transport</keyword>
<evidence type="ECO:0000250" key="1">
    <source>
        <dbReference type="UniProtKB" id="Q10R09"/>
    </source>
</evidence>
<evidence type="ECO:0000256" key="2">
    <source>
        <dbReference type="SAM" id="MobiDB-lite"/>
    </source>
</evidence>
<evidence type="ECO:0000305" key="3"/>
<evidence type="ECO:0000312" key="4">
    <source>
        <dbReference type="EMBL" id="AAD25600.1"/>
    </source>
</evidence>
<evidence type="ECO:0000312" key="5">
    <source>
        <dbReference type="EMBL" id="AEE33060.1"/>
    </source>
</evidence>
<evidence type="ECO:0000312" key="6">
    <source>
        <dbReference type="Proteomes" id="UP000006548"/>
    </source>
</evidence>
<comment type="function">
    <text evidence="1">Involved in auxin transport. Regulator of the auxin signaling pathway.</text>
</comment>
<comment type="interaction">
    <interactant intactId="EBI-25516987">
        <id>Q9SLL2</id>
    </interactant>
    <interactant intactId="EBI-4426649">
        <id>Q17TI5</id>
        <label>BRX</label>
    </interactant>
    <organismsDiffer>false</organismsDiffer>
    <experiments>3</experiments>
</comment>
<comment type="interaction">
    <interactant intactId="EBI-25516987">
        <id>Q9SLL2</id>
    </interactant>
    <interactant intactId="EBI-25506855">
        <id>O23160</id>
        <label>MYB73</label>
    </interactant>
    <organismsDiffer>false</organismsDiffer>
    <experiments>3</experiments>
</comment>
<comment type="subcellular location">
    <subcellularLocation>
        <location evidence="1">Cell membrane</location>
    </subcellularLocation>
</comment>
<comment type="similarity">
    <text evidence="3">Belongs to the BIG GRAIN 1 (BG1) plant protein family.</text>
</comment>